<name>PUR9_CHLPM</name>
<dbReference type="EC" id="2.1.2.3" evidence="1"/>
<dbReference type="EC" id="3.5.4.10" evidence="1"/>
<dbReference type="EMBL" id="CP000607">
    <property type="protein sequence ID" value="ABP36505.1"/>
    <property type="molecule type" value="Genomic_DNA"/>
</dbReference>
<dbReference type="SMR" id="A4SDE6"/>
<dbReference type="STRING" id="290318.Cvib_0483"/>
<dbReference type="KEGG" id="pvi:Cvib_0483"/>
<dbReference type="eggNOG" id="COG0138">
    <property type="taxonomic scope" value="Bacteria"/>
</dbReference>
<dbReference type="HOGENOM" id="CLU_016316_5_2_10"/>
<dbReference type="OrthoDB" id="9802065at2"/>
<dbReference type="UniPathway" id="UPA00074">
    <property type="reaction ID" value="UER00133"/>
</dbReference>
<dbReference type="UniPathway" id="UPA00074">
    <property type="reaction ID" value="UER00135"/>
</dbReference>
<dbReference type="GO" id="GO:0005829">
    <property type="term" value="C:cytosol"/>
    <property type="evidence" value="ECO:0007669"/>
    <property type="project" value="TreeGrafter"/>
</dbReference>
<dbReference type="GO" id="GO:0003937">
    <property type="term" value="F:IMP cyclohydrolase activity"/>
    <property type="evidence" value="ECO:0007669"/>
    <property type="project" value="UniProtKB-UniRule"/>
</dbReference>
<dbReference type="GO" id="GO:0004643">
    <property type="term" value="F:phosphoribosylaminoimidazolecarboxamide formyltransferase activity"/>
    <property type="evidence" value="ECO:0007669"/>
    <property type="project" value="UniProtKB-UniRule"/>
</dbReference>
<dbReference type="GO" id="GO:0006189">
    <property type="term" value="P:'de novo' IMP biosynthetic process"/>
    <property type="evidence" value="ECO:0007669"/>
    <property type="project" value="UniProtKB-UniRule"/>
</dbReference>
<dbReference type="CDD" id="cd01421">
    <property type="entry name" value="IMPCH"/>
    <property type="match status" value="1"/>
</dbReference>
<dbReference type="FunFam" id="3.40.140.20:FF:000001">
    <property type="entry name" value="Bifunctional purine biosynthesis protein PurH"/>
    <property type="match status" value="1"/>
</dbReference>
<dbReference type="FunFam" id="3.40.50.1380:FF:000001">
    <property type="entry name" value="Bifunctional purine biosynthesis protein PurH"/>
    <property type="match status" value="1"/>
</dbReference>
<dbReference type="Gene3D" id="3.40.140.20">
    <property type="match status" value="2"/>
</dbReference>
<dbReference type="Gene3D" id="3.40.50.1380">
    <property type="entry name" value="Methylglyoxal synthase-like domain"/>
    <property type="match status" value="1"/>
</dbReference>
<dbReference type="HAMAP" id="MF_00139">
    <property type="entry name" value="PurH"/>
    <property type="match status" value="1"/>
</dbReference>
<dbReference type="InterPro" id="IPR024051">
    <property type="entry name" value="AICAR_Tfase_dup_dom_sf"/>
</dbReference>
<dbReference type="InterPro" id="IPR016193">
    <property type="entry name" value="Cytidine_deaminase-like"/>
</dbReference>
<dbReference type="InterPro" id="IPR011607">
    <property type="entry name" value="MGS-like_dom"/>
</dbReference>
<dbReference type="InterPro" id="IPR036914">
    <property type="entry name" value="MGS-like_dom_sf"/>
</dbReference>
<dbReference type="InterPro" id="IPR002695">
    <property type="entry name" value="PurH-like"/>
</dbReference>
<dbReference type="NCBIfam" id="NF002049">
    <property type="entry name" value="PRK00881.1"/>
    <property type="match status" value="1"/>
</dbReference>
<dbReference type="NCBIfam" id="TIGR00355">
    <property type="entry name" value="purH"/>
    <property type="match status" value="1"/>
</dbReference>
<dbReference type="PANTHER" id="PTHR11692:SF0">
    <property type="entry name" value="BIFUNCTIONAL PURINE BIOSYNTHESIS PROTEIN ATIC"/>
    <property type="match status" value="1"/>
</dbReference>
<dbReference type="PANTHER" id="PTHR11692">
    <property type="entry name" value="BIFUNCTIONAL PURINE BIOSYNTHESIS PROTEIN PURH"/>
    <property type="match status" value="1"/>
</dbReference>
<dbReference type="Pfam" id="PF01808">
    <property type="entry name" value="AICARFT_IMPCHas"/>
    <property type="match status" value="1"/>
</dbReference>
<dbReference type="Pfam" id="PF02142">
    <property type="entry name" value="MGS"/>
    <property type="match status" value="1"/>
</dbReference>
<dbReference type="PIRSF" id="PIRSF000414">
    <property type="entry name" value="AICARFT_IMPCHas"/>
    <property type="match status" value="1"/>
</dbReference>
<dbReference type="SMART" id="SM00798">
    <property type="entry name" value="AICARFT_IMPCHas"/>
    <property type="match status" value="1"/>
</dbReference>
<dbReference type="SMART" id="SM00851">
    <property type="entry name" value="MGS"/>
    <property type="match status" value="1"/>
</dbReference>
<dbReference type="SUPFAM" id="SSF53927">
    <property type="entry name" value="Cytidine deaminase-like"/>
    <property type="match status" value="1"/>
</dbReference>
<dbReference type="SUPFAM" id="SSF52335">
    <property type="entry name" value="Methylglyoxal synthase-like"/>
    <property type="match status" value="1"/>
</dbReference>
<dbReference type="PROSITE" id="PS51855">
    <property type="entry name" value="MGS"/>
    <property type="match status" value="1"/>
</dbReference>
<gene>
    <name evidence="1" type="primary">purH</name>
    <name type="ordered locus">Cvib_0483</name>
</gene>
<proteinExistence type="inferred from homology"/>
<keyword id="KW-0378">Hydrolase</keyword>
<keyword id="KW-0511">Multifunctional enzyme</keyword>
<keyword id="KW-0658">Purine biosynthesis</keyword>
<keyword id="KW-0808">Transferase</keyword>
<sequence length="524" mass="56874">MSDPLIKRALVSVSDKTGIVDFCRELVSLGVEIFSTGGTLKTLQDAGLKAASISTITGFPEIMDGRVKTLHPKIHGGLLAVRNNPDHSAQAIENGISFIDMVVVNLYPFEATVAKPDVSFEDAIENIDIGGPSMLRSAAKNNESVTVLTDSADYAGVLAEMRAGGGATLRSTRLRLALKVFELTSRYDRAIAGYLSKSAGTEVAAAESMTVQLDKELGMRYGENPHQSAGFYRLTDADGTRSFADYFEKLHGKELSYNNMLDIAAAGGLIEEFRGEDPSVVIIKHTNPCGVAQAPTLLEAWKRAFSTDTQAPFGGIIAFNRPLDMETAKAVNAIFTEILIAPAYEEGVLDMLMKKKDRRLLVQTGALPKGGWEFKSTPFGMLVQERDSRIATRDELKVVTKRQPTEEELGDLMFAWKICKHIKSNTILYVRNRQTYGVGAGQMSRVDSSKIARWKASEVNLDLHGSVVASDAFFPFADGLLAAAEAGVTAVIQPGGSIRDNEVIEAADANNLAMVFTGMRHFKH</sequence>
<accession>A4SDE6</accession>
<feature type="chain" id="PRO_1000076489" description="Bifunctional purine biosynthesis protein PurH">
    <location>
        <begin position="1"/>
        <end position="524"/>
    </location>
</feature>
<feature type="domain" description="MGS-like" evidence="2">
    <location>
        <begin position="1"/>
        <end position="149"/>
    </location>
</feature>
<comment type="catalytic activity">
    <reaction evidence="1">
        <text>(6R)-10-formyltetrahydrofolate + 5-amino-1-(5-phospho-beta-D-ribosyl)imidazole-4-carboxamide = 5-formamido-1-(5-phospho-D-ribosyl)imidazole-4-carboxamide + (6S)-5,6,7,8-tetrahydrofolate</text>
        <dbReference type="Rhea" id="RHEA:22192"/>
        <dbReference type="ChEBI" id="CHEBI:57453"/>
        <dbReference type="ChEBI" id="CHEBI:58467"/>
        <dbReference type="ChEBI" id="CHEBI:58475"/>
        <dbReference type="ChEBI" id="CHEBI:195366"/>
        <dbReference type="EC" id="2.1.2.3"/>
    </reaction>
</comment>
<comment type="catalytic activity">
    <reaction evidence="1">
        <text>IMP + H2O = 5-formamido-1-(5-phospho-D-ribosyl)imidazole-4-carboxamide</text>
        <dbReference type="Rhea" id="RHEA:18445"/>
        <dbReference type="ChEBI" id="CHEBI:15377"/>
        <dbReference type="ChEBI" id="CHEBI:58053"/>
        <dbReference type="ChEBI" id="CHEBI:58467"/>
        <dbReference type="EC" id="3.5.4.10"/>
    </reaction>
</comment>
<comment type="pathway">
    <text evidence="1">Purine metabolism; IMP biosynthesis via de novo pathway; 5-formamido-1-(5-phospho-D-ribosyl)imidazole-4-carboxamide from 5-amino-1-(5-phospho-D-ribosyl)imidazole-4-carboxamide (10-formyl THF route): step 1/1.</text>
</comment>
<comment type="pathway">
    <text evidence="1">Purine metabolism; IMP biosynthesis via de novo pathway; IMP from 5-formamido-1-(5-phospho-D-ribosyl)imidazole-4-carboxamide: step 1/1.</text>
</comment>
<comment type="domain">
    <text evidence="1">The IMP cyclohydrolase activity resides in the N-terminal region.</text>
</comment>
<comment type="similarity">
    <text evidence="1">Belongs to the PurH family.</text>
</comment>
<reference key="1">
    <citation type="submission" date="2007-03" db="EMBL/GenBank/DDBJ databases">
        <title>Complete sequence of Prosthecochloris vibrioformis DSM 265.</title>
        <authorList>
            <consortium name="US DOE Joint Genome Institute"/>
            <person name="Copeland A."/>
            <person name="Lucas S."/>
            <person name="Lapidus A."/>
            <person name="Barry K."/>
            <person name="Detter J.C."/>
            <person name="Glavina del Rio T."/>
            <person name="Hammon N."/>
            <person name="Israni S."/>
            <person name="Pitluck S."/>
            <person name="Schmutz J."/>
            <person name="Larimer F."/>
            <person name="Land M."/>
            <person name="Hauser L."/>
            <person name="Mikhailova N."/>
            <person name="Li T."/>
            <person name="Overmann J."/>
            <person name="Schuster S.C."/>
            <person name="Bryant D.A."/>
            <person name="Richardson P."/>
        </authorList>
    </citation>
    <scope>NUCLEOTIDE SEQUENCE [LARGE SCALE GENOMIC DNA]</scope>
    <source>
        <strain>DSM 265 / 1930</strain>
    </source>
</reference>
<evidence type="ECO:0000255" key="1">
    <source>
        <dbReference type="HAMAP-Rule" id="MF_00139"/>
    </source>
</evidence>
<evidence type="ECO:0000255" key="2">
    <source>
        <dbReference type="PROSITE-ProRule" id="PRU01202"/>
    </source>
</evidence>
<organism>
    <name type="scientific">Chlorobium phaeovibrioides (strain DSM 265 / 1930)</name>
    <name type="common">Prosthecochloris vibrioformis (strain DSM 265)</name>
    <dbReference type="NCBI Taxonomy" id="290318"/>
    <lineage>
        <taxon>Bacteria</taxon>
        <taxon>Pseudomonadati</taxon>
        <taxon>Chlorobiota</taxon>
        <taxon>Chlorobiia</taxon>
        <taxon>Chlorobiales</taxon>
        <taxon>Chlorobiaceae</taxon>
        <taxon>Chlorobium/Pelodictyon group</taxon>
        <taxon>Chlorobium</taxon>
    </lineage>
</organism>
<protein>
    <recommendedName>
        <fullName evidence="1">Bifunctional purine biosynthesis protein PurH</fullName>
    </recommendedName>
    <domain>
        <recommendedName>
            <fullName evidence="1">Phosphoribosylaminoimidazolecarboxamide formyltransferase</fullName>
            <ecNumber evidence="1">2.1.2.3</ecNumber>
        </recommendedName>
        <alternativeName>
            <fullName evidence="1">AICAR transformylase</fullName>
        </alternativeName>
    </domain>
    <domain>
        <recommendedName>
            <fullName evidence="1">IMP cyclohydrolase</fullName>
            <ecNumber evidence="1">3.5.4.10</ecNumber>
        </recommendedName>
        <alternativeName>
            <fullName evidence="1">ATIC</fullName>
        </alternativeName>
        <alternativeName>
            <fullName evidence="1">IMP synthase</fullName>
        </alternativeName>
        <alternativeName>
            <fullName evidence="1">Inosinicase</fullName>
        </alternativeName>
    </domain>
</protein>